<reference key="1">
    <citation type="journal article" date="1996" name="J. Cell Sci.">
        <title>Presence and expression of G2 cyclins in the coelenterate hydra.</title>
        <authorList>
            <person name="Scheurlen-Blchle I."/>
            <person name="Hoffmeister S."/>
            <person name="Herrmans-Borgmeyer I."/>
            <person name="Schaller H.C."/>
        </authorList>
    </citation>
    <scope>NUCLEOTIDE SEQUENCE [MRNA]</scope>
</reference>
<protein>
    <recommendedName>
        <fullName>G2/mitotic-specific cyclin-A</fullName>
    </recommendedName>
</protein>
<evidence type="ECO:0000250" key="1"/>
<evidence type="ECO:0000256" key="2">
    <source>
        <dbReference type="SAM" id="MobiDB-lite"/>
    </source>
</evidence>
<evidence type="ECO:0000305" key="3"/>
<accession>P51986</accession>
<proteinExistence type="evidence at transcript level"/>
<organism>
    <name type="scientific">Hydra viridissima</name>
    <name type="common">Green hydra</name>
    <name type="synonym">Chlorohydra viridissima</name>
    <dbReference type="NCBI Taxonomy" id="6082"/>
    <lineage>
        <taxon>Eukaryota</taxon>
        <taxon>Metazoa</taxon>
        <taxon>Cnidaria</taxon>
        <taxon>Hydrozoa</taxon>
        <taxon>Hydroidolina</taxon>
        <taxon>Anthoathecata</taxon>
        <taxon>Aplanulata</taxon>
        <taxon>Hydridae</taxon>
        <taxon>Hydra</taxon>
    </lineage>
</organism>
<name>CCNA_HYDVD</name>
<feature type="chain" id="PRO_0000080344" description="G2/mitotic-specific cyclin-A">
    <location>
        <begin position="1" status="less than"/>
        <end position="420"/>
    </location>
</feature>
<feature type="region of interest" description="Disordered" evidence="2">
    <location>
        <begin position="64"/>
        <end position="93"/>
    </location>
</feature>
<feature type="compositionally biased region" description="Polar residues" evidence="2">
    <location>
        <begin position="83"/>
        <end position="93"/>
    </location>
</feature>
<feature type="non-terminal residue">
    <location>
        <position position="1"/>
    </location>
</feature>
<comment type="function">
    <text evidence="1">Essential for the control of the cell cycle at the G2/M (mitosis) transition. Interacts with the CDC2 and CDK2 protein kinases to form MPF. G2/M cyclins accumulate steadily during G2 and are abruptly destroyed at mitosis (By similarity).</text>
</comment>
<comment type="similarity">
    <text evidence="3">Belongs to the cyclin family. Cyclin AB subfamily.</text>
</comment>
<keyword id="KW-0131">Cell cycle</keyword>
<keyword id="KW-0132">Cell division</keyword>
<keyword id="KW-0195">Cyclin</keyword>
<keyword id="KW-0498">Mitosis</keyword>
<sequence>LFFQKKYFLDKQLNQNAIQIYQDNLTNQNNNIGKKAKLEDEKHAHNKSITSKYKRVPLASISNVQGSRIQPTRAAKEKLKPPQNISDSQLVNDSLKSSNSIQAHNTKNDLHKENLYNESALDTFKESPMVFSPFLSDSSCKKYSSLNGIQDIDSKLHEVFELPEYAQDIHNYLKKSEAKYRPKSNYMRKQTDINSSMRAILIDWLVEVSEEYKLIPQTLYLSVSYIDRFLSHMSVLRGKLQLVGAACMLVAAKFEEIYPPEVAEFVYITDDTYTAKQVLRMEHLILKTLAFDLSVPTCRDFLSRYLFAANAKPESQLKYLAEYLSELTLINCDISVKYAPSMIAASSICVANHMLNSIPWTPTLEFYSGYNIQDLRSCLNEIHLLHLAASTNPQQAIQQKYKSPKFGCVSSLVPLEMPCF</sequence>
<dbReference type="EMBL" id="X90983">
    <property type="protein sequence ID" value="CAA62470.1"/>
    <property type="molecule type" value="mRNA"/>
</dbReference>
<dbReference type="SMR" id="P51986"/>
<dbReference type="GO" id="GO:0016538">
    <property type="term" value="F:cyclin-dependent protein serine/threonine kinase regulator activity"/>
    <property type="evidence" value="ECO:0007669"/>
    <property type="project" value="InterPro"/>
</dbReference>
<dbReference type="GO" id="GO:0051301">
    <property type="term" value="P:cell division"/>
    <property type="evidence" value="ECO:0007669"/>
    <property type="project" value="UniProtKB-KW"/>
</dbReference>
<dbReference type="GO" id="GO:0044772">
    <property type="term" value="P:mitotic cell cycle phase transition"/>
    <property type="evidence" value="ECO:0007669"/>
    <property type="project" value="InterPro"/>
</dbReference>
<dbReference type="CDD" id="cd20506">
    <property type="entry name" value="CYCLIN_AtCycA-like_rpt2"/>
    <property type="match status" value="1"/>
</dbReference>
<dbReference type="CDD" id="cd20504">
    <property type="entry name" value="CYCLIN_CCNA_rpt1"/>
    <property type="match status" value="1"/>
</dbReference>
<dbReference type="FunFam" id="1.10.472.10:FF:000001">
    <property type="entry name" value="G2/mitotic-specific cyclin"/>
    <property type="match status" value="1"/>
</dbReference>
<dbReference type="Gene3D" id="1.10.472.10">
    <property type="entry name" value="Cyclin-like"/>
    <property type="match status" value="2"/>
</dbReference>
<dbReference type="InterPro" id="IPR039361">
    <property type="entry name" value="Cyclin"/>
</dbReference>
<dbReference type="InterPro" id="IPR013763">
    <property type="entry name" value="Cyclin-like_dom"/>
</dbReference>
<dbReference type="InterPro" id="IPR036915">
    <property type="entry name" value="Cyclin-like_sf"/>
</dbReference>
<dbReference type="InterPro" id="IPR046965">
    <property type="entry name" value="Cyclin_A/B-like"/>
</dbReference>
<dbReference type="InterPro" id="IPR004367">
    <property type="entry name" value="Cyclin_C-dom"/>
</dbReference>
<dbReference type="InterPro" id="IPR006671">
    <property type="entry name" value="Cyclin_N"/>
</dbReference>
<dbReference type="InterPro" id="IPR048258">
    <property type="entry name" value="Cyclins_cyclin-box"/>
</dbReference>
<dbReference type="PANTHER" id="PTHR10177">
    <property type="entry name" value="CYCLINS"/>
    <property type="match status" value="1"/>
</dbReference>
<dbReference type="Pfam" id="PF02984">
    <property type="entry name" value="Cyclin_C"/>
    <property type="match status" value="1"/>
</dbReference>
<dbReference type="Pfam" id="PF00134">
    <property type="entry name" value="Cyclin_N"/>
    <property type="match status" value="1"/>
</dbReference>
<dbReference type="PIRSF" id="PIRSF001771">
    <property type="entry name" value="Cyclin_A_B_D_E"/>
    <property type="match status" value="1"/>
</dbReference>
<dbReference type="SMART" id="SM00385">
    <property type="entry name" value="CYCLIN"/>
    <property type="match status" value="2"/>
</dbReference>
<dbReference type="SMART" id="SM01332">
    <property type="entry name" value="Cyclin_C"/>
    <property type="match status" value="1"/>
</dbReference>
<dbReference type="SUPFAM" id="SSF47954">
    <property type="entry name" value="Cyclin-like"/>
    <property type="match status" value="2"/>
</dbReference>
<dbReference type="PROSITE" id="PS00292">
    <property type="entry name" value="CYCLINS"/>
    <property type="match status" value="1"/>
</dbReference>